<comment type="function">
    <text evidence="1">Catalyzes the condensation of carbamoyl phosphate and aspartate to form carbamoyl aspartate and inorganic phosphate, the committed step in the de novo pyrimidine nucleotide biosynthesis pathway.</text>
</comment>
<comment type="catalytic activity">
    <reaction evidence="1">
        <text>carbamoyl phosphate + L-aspartate = N-carbamoyl-L-aspartate + phosphate + H(+)</text>
        <dbReference type="Rhea" id="RHEA:20013"/>
        <dbReference type="ChEBI" id="CHEBI:15378"/>
        <dbReference type="ChEBI" id="CHEBI:29991"/>
        <dbReference type="ChEBI" id="CHEBI:32814"/>
        <dbReference type="ChEBI" id="CHEBI:43474"/>
        <dbReference type="ChEBI" id="CHEBI:58228"/>
        <dbReference type="EC" id="2.1.3.2"/>
    </reaction>
</comment>
<comment type="pathway">
    <text evidence="1">Pyrimidine metabolism; UMP biosynthesis via de novo pathway; (S)-dihydroorotate from bicarbonate: step 2/3.</text>
</comment>
<comment type="subunit">
    <text evidence="1">Heterododecamer (2C3:3R2) of six catalytic PyrB chains organized as two trimers (C3), and six regulatory PyrI chains organized as three dimers (R2).</text>
</comment>
<comment type="similarity">
    <text evidence="1">Belongs to the aspartate/ornithine carbamoyltransferase superfamily. ATCase family.</text>
</comment>
<sequence length="313" mass="33588">MIGRHKHCIALEDFSREEILEVIDLAVSMKEVLQRPIKKVPSLRGKMVVNLFFEASTRTRSSFETAAKILSADALNWTSSSSSVTKGETLVDTAKNLEAMRPDVLVIRHSAGGAPRLVAEHVGCSVVSAGDGAHEHPSQGLLDCFTLREKLGTLEGKTVAIVGDVSHSRVARSDLHAFPKLGAKVRLCGPPTMMPAGVERLGATVHTDLREAVDGADAVIMLRIQHERIGDPLIPGTREYSKVWGLNAKKAADWLKPSCVILHPGPINRGVELSPEVADGPRSVILDQVQNGVAVRMAILYLLAGGAGEEARA</sequence>
<proteinExistence type="inferred from homology"/>
<accession>Q2IIB1</accession>
<feature type="chain" id="PRO_0000321070" description="Aspartate carbamoyltransferase catalytic subunit">
    <location>
        <begin position="1"/>
        <end position="313"/>
    </location>
</feature>
<feature type="binding site" evidence="1">
    <location>
        <position position="58"/>
    </location>
    <ligand>
        <name>carbamoyl phosphate</name>
        <dbReference type="ChEBI" id="CHEBI:58228"/>
    </ligand>
</feature>
<feature type="binding site" evidence="1">
    <location>
        <position position="59"/>
    </location>
    <ligand>
        <name>carbamoyl phosphate</name>
        <dbReference type="ChEBI" id="CHEBI:58228"/>
    </ligand>
</feature>
<feature type="binding site" evidence="1">
    <location>
        <position position="86"/>
    </location>
    <ligand>
        <name>L-aspartate</name>
        <dbReference type="ChEBI" id="CHEBI:29991"/>
    </ligand>
</feature>
<feature type="binding site" evidence="1">
    <location>
        <position position="108"/>
    </location>
    <ligand>
        <name>carbamoyl phosphate</name>
        <dbReference type="ChEBI" id="CHEBI:58228"/>
    </ligand>
</feature>
<feature type="binding site" evidence="1">
    <location>
        <position position="136"/>
    </location>
    <ligand>
        <name>carbamoyl phosphate</name>
        <dbReference type="ChEBI" id="CHEBI:58228"/>
    </ligand>
</feature>
<feature type="binding site" evidence="1">
    <location>
        <position position="139"/>
    </location>
    <ligand>
        <name>carbamoyl phosphate</name>
        <dbReference type="ChEBI" id="CHEBI:58228"/>
    </ligand>
</feature>
<feature type="binding site" evidence="1">
    <location>
        <position position="169"/>
    </location>
    <ligand>
        <name>L-aspartate</name>
        <dbReference type="ChEBI" id="CHEBI:29991"/>
    </ligand>
</feature>
<feature type="binding site" evidence="1">
    <location>
        <position position="223"/>
    </location>
    <ligand>
        <name>L-aspartate</name>
        <dbReference type="ChEBI" id="CHEBI:29991"/>
    </ligand>
</feature>
<feature type="binding site" evidence="1">
    <location>
        <position position="265"/>
    </location>
    <ligand>
        <name>carbamoyl phosphate</name>
        <dbReference type="ChEBI" id="CHEBI:58228"/>
    </ligand>
</feature>
<feature type="binding site" evidence="1">
    <location>
        <position position="266"/>
    </location>
    <ligand>
        <name>carbamoyl phosphate</name>
        <dbReference type="ChEBI" id="CHEBI:58228"/>
    </ligand>
</feature>
<organism>
    <name type="scientific">Anaeromyxobacter dehalogenans (strain 2CP-C)</name>
    <dbReference type="NCBI Taxonomy" id="290397"/>
    <lineage>
        <taxon>Bacteria</taxon>
        <taxon>Pseudomonadati</taxon>
        <taxon>Myxococcota</taxon>
        <taxon>Myxococcia</taxon>
        <taxon>Myxococcales</taxon>
        <taxon>Cystobacterineae</taxon>
        <taxon>Anaeromyxobacteraceae</taxon>
        <taxon>Anaeromyxobacter</taxon>
    </lineage>
</organism>
<name>PYRB_ANADE</name>
<dbReference type="EC" id="2.1.3.2" evidence="1"/>
<dbReference type="EMBL" id="CP000251">
    <property type="protein sequence ID" value="ABC81391.1"/>
    <property type="molecule type" value="Genomic_DNA"/>
</dbReference>
<dbReference type="RefSeq" id="WP_011420674.1">
    <property type="nucleotide sequence ID" value="NC_007760.1"/>
</dbReference>
<dbReference type="SMR" id="Q2IIB1"/>
<dbReference type="STRING" id="290397.Adeh_1618"/>
<dbReference type="KEGG" id="ade:Adeh_1618"/>
<dbReference type="eggNOG" id="COG0540">
    <property type="taxonomic scope" value="Bacteria"/>
</dbReference>
<dbReference type="HOGENOM" id="CLU_043846_2_0_7"/>
<dbReference type="OrthoDB" id="9774690at2"/>
<dbReference type="UniPathway" id="UPA00070">
    <property type="reaction ID" value="UER00116"/>
</dbReference>
<dbReference type="Proteomes" id="UP000001935">
    <property type="component" value="Chromosome"/>
</dbReference>
<dbReference type="GO" id="GO:0005829">
    <property type="term" value="C:cytosol"/>
    <property type="evidence" value="ECO:0007669"/>
    <property type="project" value="TreeGrafter"/>
</dbReference>
<dbReference type="GO" id="GO:0016597">
    <property type="term" value="F:amino acid binding"/>
    <property type="evidence" value="ECO:0007669"/>
    <property type="project" value="InterPro"/>
</dbReference>
<dbReference type="GO" id="GO:0004070">
    <property type="term" value="F:aspartate carbamoyltransferase activity"/>
    <property type="evidence" value="ECO:0007669"/>
    <property type="project" value="UniProtKB-UniRule"/>
</dbReference>
<dbReference type="GO" id="GO:0006207">
    <property type="term" value="P:'de novo' pyrimidine nucleobase biosynthetic process"/>
    <property type="evidence" value="ECO:0007669"/>
    <property type="project" value="InterPro"/>
</dbReference>
<dbReference type="GO" id="GO:0044205">
    <property type="term" value="P:'de novo' UMP biosynthetic process"/>
    <property type="evidence" value="ECO:0007669"/>
    <property type="project" value="UniProtKB-UniRule"/>
</dbReference>
<dbReference type="GO" id="GO:0006520">
    <property type="term" value="P:amino acid metabolic process"/>
    <property type="evidence" value="ECO:0007669"/>
    <property type="project" value="InterPro"/>
</dbReference>
<dbReference type="Gene3D" id="3.40.50.1370">
    <property type="entry name" value="Aspartate/ornithine carbamoyltransferase"/>
    <property type="match status" value="2"/>
</dbReference>
<dbReference type="HAMAP" id="MF_00001">
    <property type="entry name" value="Asp_carb_tr"/>
    <property type="match status" value="1"/>
</dbReference>
<dbReference type="InterPro" id="IPR006132">
    <property type="entry name" value="Asp/Orn_carbamoyltranf_P-bd"/>
</dbReference>
<dbReference type="InterPro" id="IPR006130">
    <property type="entry name" value="Asp/Orn_carbamoylTrfase"/>
</dbReference>
<dbReference type="InterPro" id="IPR036901">
    <property type="entry name" value="Asp/Orn_carbamoylTrfase_sf"/>
</dbReference>
<dbReference type="InterPro" id="IPR002082">
    <property type="entry name" value="Asp_carbamoyltransf"/>
</dbReference>
<dbReference type="InterPro" id="IPR006131">
    <property type="entry name" value="Asp_carbamoyltransf_Asp/Orn-bd"/>
</dbReference>
<dbReference type="NCBIfam" id="TIGR00670">
    <property type="entry name" value="asp_carb_tr"/>
    <property type="match status" value="1"/>
</dbReference>
<dbReference type="NCBIfam" id="NF002032">
    <property type="entry name" value="PRK00856.1"/>
    <property type="match status" value="1"/>
</dbReference>
<dbReference type="PANTHER" id="PTHR45753:SF6">
    <property type="entry name" value="ASPARTATE CARBAMOYLTRANSFERASE"/>
    <property type="match status" value="1"/>
</dbReference>
<dbReference type="PANTHER" id="PTHR45753">
    <property type="entry name" value="ORNITHINE CARBAMOYLTRANSFERASE, MITOCHONDRIAL"/>
    <property type="match status" value="1"/>
</dbReference>
<dbReference type="Pfam" id="PF00185">
    <property type="entry name" value="OTCace"/>
    <property type="match status" value="1"/>
</dbReference>
<dbReference type="Pfam" id="PF02729">
    <property type="entry name" value="OTCace_N"/>
    <property type="match status" value="1"/>
</dbReference>
<dbReference type="PRINTS" id="PR00100">
    <property type="entry name" value="AOTCASE"/>
</dbReference>
<dbReference type="PRINTS" id="PR00101">
    <property type="entry name" value="ATCASE"/>
</dbReference>
<dbReference type="SUPFAM" id="SSF53671">
    <property type="entry name" value="Aspartate/ornithine carbamoyltransferase"/>
    <property type="match status" value="1"/>
</dbReference>
<dbReference type="PROSITE" id="PS00097">
    <property type="entry name" value="CARBAMOYLTRANSFERASE"/>
    <property type="match status" value="1"/>
</dbReference>
<gene>
    <name evidence="1" type="primary">pyrB</name>
    <name type="ordered locus">Adeh_1618</name>
</gene>
<protein>
    <recommendedName>
        <fullName evidence="1">Aspartate carbamoyltransferase catalytic subunit</fullName>
        <ecNumber evidence="1">2.1.3.2</ecNumber>
    </recommendedName>
    <alternativeName>
        <fullName evidence="1">Aspartate transcarbamylase</fullName>
        <shortName evidence="1">ATCase</shortName>
    </alternativeName>
</protein>
<evidence type="ECO:0000255" key="1">
    <source>
        <dbReference type="HAMAP-Rule" id="MF_00001"/>
    </source>
</evidence>
<reference key="1">
    <citation type="submission" date="2006-01" db="EMBL/GenBank/DDBJ databases">
        <title>Complete sequence of Anaeromyxobacter dehalogenans 2CP-C.</title>
        <authorList>
            <person name="Copeland A."/>
            <person name="Lucas S."/>
            <person name="Lapidus A."/>
            <person name="Barry K."/>
            <person name="Detter J.C."/>
            <person name="Glavina T."/>
            <person name="Hammon N."/>
            <person name="Israni S."/>
            <person name="Pitluck S."/>
            <person name="Brettin T."/>
            <person name="Bruce D."/>
            <person name="Han C."/>
            <person name="Tapia R."/>
            <person name="Gilna P."/>
            <person name="Kiss H."/>
            <person name="Schmutz J."/>
            <person name="Larimer F."/>
            <person name="Land M."/>
            <person name="Kyrpides N."/>
            <person name="Anderson I."/>
            <person name="Sanford R.A."/>
            <person name="Ritalahti K.M."/>
            <person name="Thomas H.S."/>
            <person name="Kirby J.R."/>
            <person name="Zhulin I.B."/>
            <person name="Loeffler F.E."/>
            <person name="Richardson P."/>
        </authorList>
    </citation>
    <scope>NUCLEOTIDE SEQUENCE [LARGE SCALE GENOMIC DNA]</scope>
    <source>
        <strain>2CP-C</strain>
    </source>
</reference>
<keyword id="KW-0665">Pyrimidine biosynthesis</keyword>
<keyword id="KW-1185">Reference proteome</keyword>
<keyword id="KW-0808">Transferase</keyword>